<gene>
    <name type="primary">OR1L8</name>
</gene>
<comment type="function">
    <text evidence="4">Odorant receptor.</text>
</comment>
<comment type="subcellular location">
    <subcellularLocation>
        <location>Cell membrane</location>
        <topology>Multi-pass membrane protein</topology>
    </subcellularLocation>
</comment>
<comment type="similarity">
    <text evidence="2">Belongs to the G-protein coupled receptor 1 family.</text>
</comment>
<comment type="online information" name="Human Olfactory Receptor Data Exploratorium (HORDE)">
    <link uri="http://genome.weizmann.ac.il/horde/card/index/symbol:OR1L8"/>
</comment>
<keyword id="KW-1003">Cell membrane</keyword>
<keyword id="KW-1015">Disulfide bond</keyword>
<keyword id="KW-0297">G-protein coupled receptor</keyword>
<keyword id="KW-0325">Glycoprotein</keyword>
<keyword id="KW-0472">Membrane</keyword>
<keyword id="KW-0552">Olfaction</keyword>
<keyword id="KW-0675">Receptor</keyword>
<keyword id="KW-1185">Reference proteome</keyword>
<keyword id="KW-0716">Sensory transduction</keyword>
<keyword id="KW-0807">Transducer</keyword>
<keyword id="KW-0812">Transmembrane</keyword>
<keyword id="KW-1133">Transmembrane helix</keyword>
<evidence type="ECO:0000255" key="1"/>
<evidence type="ECO:0000255" key="2">
    <source>
        <dbReference type="PROSITE-ProRule" id="PRU00521"/>
    </source>
</evidence>
<evidence type="ECO:0000269" key="3">
    <source>
    </source>
</evidence>
<evidence type="ECO:0000305" key="4"/>
<feature type="chain" id="PRO_0000150446" description="Olfactory receptor 1L8">
    <location>
        <begin position="1"/>
        <end position="309"/>
    </location>
</feature>
<feature type="topological domain" description="Extracellular" evidence="1">
    <location>
        <begin position="1"/>
        <end position="26"/>
    </location>
</feature>
<feature type="transmembrane region" description="Helical; Name=1" evidence="1">
    <location>
        <begin position="27"/>
        <end position="50"/>
    </location>
</feature>
<feature type="topological domain" description="Cytoplasmic" evidence="1">
    <location>
        <begin position="51"/>
        <end position="58"/>
    </location>
</feature>
<feature type="transmembrane region" description="Helical; Name=2" evidence="1">
    <location>
        <begin position="59"/>
        <end position="80"/>
    </location>
</feature>
<feature type="topological domain" description="Extracellular" evidence="1">
    <location>
        <begin position="81"/>
        <end position="101"/>
    </location>
</feature>
<feature type="transmembrane region" description="Helical; Name=3" evidence="1">
    <location>
        <begin position="102"/>
        <end position="121"/>
    </location>
</feature>
<feature type="topological domain" description="Cytoplasmic" evidence="1">
    <location>
        <begin position="122"/>
        <end position="140"/>
    </location>
</feature>
<feature type="transmembrane region" description="Helical; Name=4" evidence="1">
    <location>
        <begin position="141"/>
        <end position="159"/>
    </location>
</feature>
<feature type="topological domain" description="Extracellular" evidence="1">
    <location>
        <begin position="160"/>
        <end position="197"/>
    </location>
</feature>
<feature type="transmembrane region" description="Helical; Name=5" evidence="1">
    <location>
        <begin position="198"/>
        <end position="220"/>
    </location>
</feature>
<feature type="topological domain" description="Cytoplasmic" evidence="1">
    <location>
        <begin position="221"/>
        <end position="237"/>
    </location>
</feature>
<feature type="transmembrane region" description="Helical; Name=6" evidence="1">
    <location>
        <begin position="238"/>
        <end position="260"/>
    </location>
</feature>
<feature type="topological domain" description="Extracellular" evidence="1">
    <location>
        <begin position="261"/>
        <end position="272"/>
    </location>
</feature>
<feature type="transmembrane region" description="Helical; Name=7" evidence="1">
    <location>
        <begin position="273"/>
        <end position="292"/>
    </location>
</feature>
<feature type="topological domain" description="Cytoplasmic" evidence="1">
    <location>
        <begin position="293"/>
        <end position="309"/>
    </location>
</feature>
<feature type="glycosylation site" description="N-linked (GlcNAc...) asparagine" evidence="1">
    <location>
        <position position="5"/>
    </location>
</feature>
<feature type="disulfide bond" evidence="2">
    <location>
        <begin position="98"/>
        <end position="190"/>
    </location>
</feature>
<feature type="sequence variant" id="VAR_024087" description="In dbSNP:rs10985704.">
    <original>T</original>
    <variation>P</variation>
    <location>
        <position position="27"/>
    </location>
</feature>
<feature type="sequence variant" id="VAR_024088" description="In dbSNP:rs10739614." evidence="3">
    <original>R</original>
    <variation>P</variation>
    <location>
        <position position="211"/>
    </location>
</feature>
<reference key="1">
    <citation type="submission" date="2001-07" db="EMBL/GenBank/DDBJ databases">
        <title>Genome-wide discovery and analysis of human seven transmembrane helix receptor genes.</title>
        <authorList>
            <person name="Suwa M."/>
            <person name="Sato T."/>
            <person name="Okouchi I."/>
            <person name="Arita M."/>
            <person name="Futami K."/>
            <person name="Matsumoto S."/>
            <person name="Tsutsumi S."/>
            <person name="Aburatani H."/>
            <person name="Asai K."/>
            <person name="Akiyama Y."/>
        </authorList>
    </citation>
    <scope>NUCLEOTIDE SEQUENCE [GENOMIC DNA]</scope>
</reference>
<reference key="2">
    <citation type="journal article" date="2004" name="Nature">
        <title>DNA sequence and analysis of human chromosome 9.</title>
        <authorList>
            <person name="Humphray S.J."/>
            <person name="Oliver K."/>
            <person name="Hunt A.R."/>
            <person name="Plumb R.W."/>
            <person name="Loveland J.E."/>
            <person name="Howe K.L."/>
            <person name="Andrews T.D."/>
            <person name="Searle S."/>
            <person name="Hunt S.E."/>
            <person name="Scott C.E."/>
            <person name="Jones M.C."/>
            <person name="Ainscough R."/>
            <person name="Almeida J.P."/>
            <person name="Ambrose K.D."/>
            <person name="Ashwell R.I.S."/>
            <person name="Babbage A.K."/>
            <person name="Babbage S."/>
            <person name="Bagguley C.L."/>
            <person name="Bailey J."/>
            <person name="Banerjee R."/>
            <person name="Barker D.J."/>
            <person name="Barlow K.F."/>
            <person name="Bates K."/>
            <person name="Beasley H."/>
            <person name="Beasley O."/>
            <person name="Bird C.P."/>
            <person name="Bray-Allen S."/>
            <person name="Brown A.J."/>
            <person name="Brown J.Y."/>
            <person name="Burford D."/>
            <person name="Burrill W."/>
            <person name="Burton J."/>
            <person name="Carder C."/>
            <person name="Carter N.P."/>
            <person name="Chapman J.C."/>
            <person name="Chen Y."/>
            <person name="Clarke G."/>
            <person name="Clark S.Y."/>
            <person name="Clee C.M."/>
            <person name="Clegg S."/>
            <person name="Collier R.E."/>
            <person name="Corby N."/>
            <person name="Crosier M."/>
            <person name="Cummings A.T."/>
            <person name="Davies J."/>
            <person name="Dhami P."/>
            <person name="Dunn M."/>
            <person name="Dutta I."/>
            <person name="Dyer L.W."/>
            <person name="Earthrowl M.E."/>
            <person name="Faulkner L."/>
            <person name="Fleming C.J."/>
            <person name="Frankish A."/>
            <person name="Frankland J.A."/>
            <person name="French L."/>
            <person name="Fricker D.G."/>
            <person name="Garner P."/>
            <person name="Garnett J."/>
            <person name="Ghori J."/>
            <person name="Gilbert J.G.R."/>
            <person name="Glison C."/>
            <person name="Grafham D.V."/>
            <person name="Gribble S."/>
            <person name="Griffiths C."/>
            <person name="Griffiths-Jones S."/>
            <person name="Grocock R."/>
            <person name="Guy J."/>
            <person name="Hall R.E."/>
            <person name="Hammond S."/>
            <person name="Harley J.L."/>
            <person name="Harrison E.S.I."/>
            <person name="Hart E.A."/>
            <person name="Heath P.D."/>
            <person name="Henderson C.D."/>
            <person name="Hopkins B.L."/>
            <person name="Howard P.J."/>
            <person name="Howden P.J."/>
            <person name="Huckle E."/>
            <person name="Johnson C."/>
            <person name="Johnson D."/>
            <person name="Joy A.A."/>
            <person name="Kay M."/>
            <person name="Keenan S."/>
            <person name="Kershaw J.K."/>
            <person name="Kimberley A.M."/>
            <person name="King A."/>
            <person name="Knights A."/>
            <person name="Laird G.K."/>
            <person name="Langford C."/>
            <person name="Lawlor S."/>
            <person name="Leongamornlert D.A."/>
            <person name="Leversha M."/>
            <person name="Lloyd C."/>
            <person name="Lloyd D.M."/>
            <person name="Lovell J."/>
            <person name="Martin S."/>
            <person name="Mashreghi-Mohammadi M."/>
            <person name="Matthews L."/>
            <person name="McLaren S."/>
            <person name="McLay K.E."/>
            <person name="McMurray A."/>
            <person name="Milne S."/>
            <person name="Nickerson T."/>
            <person name="Nisbett J."/>
            <person name="Nordsiek G."/>
            <person name="Pearce A.V."/>
            <person name="Peck A.I."/>
            <person name="Porter K.M."/>
            <person name="Pandian R."/>
            <person name="Pelan S."/>
            <person name="Phillimore B."/>
            <person name="Povey S."/>
            <person name="Ramsey Y."/>
            <person name="Rand V."/>
            <person name="Scharfe M."/>
            <person name="Sehra H.K."/>
            <person name="Shownkeen R."/>
            <person name="Sims S.K."/>
            <person name="Skuce C.D."/>
            <person name="Smith M."/>
            <person name="Steward C.A."/>
            <person name="Swarbreck D."/>
            <person name="Sycamore N."/>
            <person name="Tester J."/>
            <person name="Thorpe A."/>
            <person name="Tracey A."/>
            <person name="Tromans A."/>
            <person name="Thomas D.W."/>
            <person name="Wall M."/>
            <person name="Wallis J.M."/>
            <person name="West A.P."/>
            <person name="Whitehead S.L."/>
            <person name="Willey D.L."/>
            <person name="Williams S.A."/>
            <person name="Wilming L."/>
            <person name="Wray P.W."/>
            <person name="Young L."/>
            <person name="Ashurst J.L."/>
            <person name="Coulson A."/>
            <person name="Blocker H."/>
            <person name="Durbin R.M."/>
            <person name="Sulston J.E."/>
            <person name="Hubbard T."/>
            <person name="Jackson M.J."/>
            <person name="Bentley D.R."/>
            <person name="Beck S."/>
            <person name="Rogers J."/>
            <person name="Dunham I."/>
        </authorList>
    </citation>
    <scope>NUCLEOTIDE SEQUENCE [LARGE SCALE GENOMIC DNA]</scope>
</reference>
<reference key="3">
    <citation type="submission" date="2005-07" db="EMBL/GenBank/DDBJ databases">
        <authorList>
            <person name="Mural R.J."/>
            <person name="Istrail S."/>
            <person name="Sutton G.G."/>
            <person name="Florea L."/>
            <person name="Halpern A.L."/>
            <person name="Mobarry C.M."/>
            <person name="Lippert R."/>
            <person name="Walenz B."/>
            <person name="Shatkay H."/>
            <person name="Dew I."/>
            <person name="Miller J.R."/>
            <person name="Flanigan M.J."/>
            <person name="Edwards N.J."/>
            <person name="Bolanos R."/>
            <person name="Fasulo D."/>
            <person name="Halldorsson B.V."/>
            <person name="Hannenhalli S."/>
            <person name="Turner R."/>
            <person name="Yooseph S."/>
            <person name="Lu F."/>
            <person name="Nusskern D.R."/>
            <person name="Shue B.C."/>
            <person name="Zheng X.H."/>
            <person name="Zhong F."/>
            <person name="Delcher A.L."/>
            <person name="Huson D.H."/>
            <person name="Kravitz S.A."/>
            <person name="Mouchard L."/>
            <person name="Reinert K."/>
            <person name="Remington K.A."/>
            <person name="Clark A.G."/>
            <person name="Waterman M.S."/>
            <person name="Eichler E.E."/>
            <person name="Adams M.D."/>
            <person name="Hunkapiller M.W."/>
            <person name="Myers E.W."/>
            <person name="Venter J.C."/>
        </authorList>
    </citation>
    <scope>NUCLEOTIDE SEQUENCE [LARGE SCALE GENOMIC DNA]</scope>
</reference>
<reference key="4">
    <citation type="journal article" date="2004" name="Genome Res.">
        <title>The status, quality, and expansion of the NIH full-length cDNA project: the Mammalian Gene Collection (MGC).</title>
        <authorList>
            <consortium name="The MGC Project Team"/>
        </authorList>
    </citation>
    <scope>NUCLEOTIDE SEQUENCE [LARGE SCALE MRNA]</scope>
    <scope>VARIANT PRO-211</scope>
</reference>
<reference key="5">
    <citation type="journal article" date="2002" name="Genomics">
        <title>DEFOG: a practical scheme for deciphering families of genes.</title>
        <authorList>
            <person name="Fuchs T."/>
            <person name="Malecova B."/>
            <person name="Linhart C."/>
            <person name="Sharan R."/>
            <person name="Khen M."/>
            <person name="Herwig R."/>
            <person name="Shmulevich D."/>
            <person name="Elkon R."/>
            <person name="Steinfath M."/>
            <person name="O'Brien J.K."/>
            <person name="Radelof U."/>
            <person name="Lehrach H."/>
            <person name="Lancet D."/>
            <person name="Shamir R."/>
        </authorList>
    </citation>
    <scope>NUCLEOTIDE SEQUENCE [GENOMIC DNA] OF 69-283</scope>
</reference>
<reference key="6">
    <citation type="journal article" date="2004" name="Proc. Natl. Acad. Sci. U.S.A.">
        <title>The human olfactory receptor gene family.</title>
        <authorList>
            <person name="Malnic B."/>
            <person name="Godfrey P.A."/>
            <person name="Buck L.B."/>
        </authorList>
    </citation>
    <scope>IDENTIFICATION</scope>
</reference>
<reference key="7">
    <citation type="journal article" date="2004" name="Proc. Natl. Acad. Sci. U.S.A.">
        <authorList>
            <person name="Malnic B."/>
            <person name="Godfrey P.A."/>
            <person name="Buck L.B."/>
        </authorList>
    </citation>
    <scope>ERRATUM OF PUBMED:14983052</scope>
</reference>
<organism>
    <name type="scientific">Homo sapiens</name>
    <name type="common">Human</name>
    <dbReference type="NCBI Taxonomy" id="9606"/>
    <lineage>
        <taxon>Eukaryota</taxon>
        <taxon>Metazoa</taxon>
        <taxon>Chordata</taxon>
        <taxon>Craniata</taxon>
        <taxon>Vertebrata</taxon>
        <taxon>Euteleostomi</taxon>
        <taxon>Mammalia</taxon>
        <taxon>Eutheria</taxon>
        <taxon>Euarchontoglires</taxon>
        <taxon>Primates</taxon>
        <taxon>Haplorrhini</taxon>
        <taxon>Catarrhini</taxon>
        <taxon>Hominidae</taxon>
        <taxon>Homo</taxon>
    </lineage>
</organism>
<protein>
    <recommendedName>
        <fullName>Olfactory receptor 1L8</fullName>
    </recommendedName>
    <alternativeName>
        <fullName>Olfactory receptor OR9-24</fullName>
    </alternativeName>
</protein>
<sequence>MERINHTSSVSEFILLGLSSRPEDQKTLFVLFLIVYLVTITGNLLIILAIRFNPHLQTPMYFFLSFLSLTDICFTTSVVPKMLMNFLSEKKTISYAGCLTQMYFLYALGNSDSCLLAVMAFDRYVAVCDPFHYVTTMSHHHCVLLVAFSCSFPHLHSLLHTLLLNRLTFCDSNVIHHFLCDLSPVLKLSCSSIFVNEIVQMTEAPIVLVTRFLCIAFSYIRILTTVLKIPSTSGKRKAFSTCGFYLTVVTLFYGSIFCVYLQPPSTYAVKDHVATIVYTVLSSMLNPFIYSLRNKDLKQGLRKLMSKRS</sequence>
<dbReference type="EMBL" id="AB065721">
    <property type="protein sequence ID" value="BAC05942.1"/>
    <property type="molecule type" value="Genomic_DNA"/>
</dbReference>
<dbReference type="EMBL" id="AL359636">
    <property type="status" value="NOT_ANNOTATED_CDS"/>
    <property type="molecule type" value="Genomic_DNA"/>
</dbReference>
<dbReference type="EMBL" id="CH471090">
    <property type="protein sequence ID" value="EAW87536.1"/>
    <property type="molecule type" value="Genomic_DNA"/>
</dbReference>
<dbReference type="EMBL" id="BC140910">
    <property type="protein sequence ID" value="AAI40911.1"/>
    <property type="molecule type" value="mRNA"/>
</dbReference>
<dbReference type="EMBL" id="AF399564">
    <property type="protein sequence ID" value="AAK95049.1"/>
    <property type="molecule type" value="Genomic_DNA"/>
</dbReference>
<dbReference type="EMBL" id="BK004447">
    <property type="protein sequence ID" value="DAA04845.1"/>
    <property type="molecule type" value="Genomic_DNA"/>
</dbReference>
<dbReference type="CCDS" id="CCDS35124.1"/>
<dbReference type="RefSeq" id="NP_001004454.1">
    <property type="nucleotide sequence ID" value="NM_001004454.2"/>
</dbReference>
<dbReference type="RefSeq" id="XP_016869773.1">
    <property type="nucleotide sequence ID" value="XM_017014284.1"/>
</dbReference>
<dbReference type="RefSeq" id="XP_016869774.1">
    <property type="nucleotide sequence ID" value="XM_017014285.2"/>
</dbReference>
<dbReference type="RefSeq" id="XP_016869775.1">
    <property type="nucleotide sequence ID" value="XM_017014286.2"/>
</dbReference>
<dbReference type="SMR" id="Q8NGR8"/>
<dbReference type="FunCoup" id="Q8NGR8">
    <property type="interactions" value="458"/>
</dbReference>
<dbReference type="STRING" id="9606.ENSP00000493411"/>
<dbReference type="GlyCosmos" id="Q8NGR8">
    <property type="glycosylation" value="1 site, No reported glycans"/>
</dbReference>
<dbReference type="GlyGen" id="Q8NGR8">
    <property type="glycosylation" value="1 site"/>
</dbReference>
<dbReference type="iPTMnet" id="Q8NGR8"/>
<dbReference type="PhosphoSitePlus" id="Q8NGR8"/>
<dbReference type="BioMuta" id="OR1L8"/>
<dbReference type="DMDM" id="38372757"/>
<dbReference type="jPOST" id="Q8NGR8"/>
<dbReference type="MassIVE" id="Q8NGR8"/>
<dbReference type="PaxDb" id="9606-ENSP00000306607"/>
<dbReference type="PeptideAtlas" id="Q8NGR8"/>
<dbReference type="Antibodypedia" id="30321">
    <property type="antibodies" value="33 antibodies from 16 providers"/>
</dbReference>
<dbReference type="DNASU" id="138881"/>
<dbReference type="Ensembl" id="ENST00000641027.1">
    <property type="protein sequence ID" value="ENSP00000493411.1"/>
    <property type="gene ID" value="ENSG00000171496.5"/>
</dbReference>
<dbReference type="GeneID" id="138881"/>
<dbReference type="KEGG" id="hsa:138881"/>
<dbReference type="MANE-Select" id="ENST00000641027.1">
    <property type="protein sequence ID" value="ENSP00000493411.1"/>
    <property type="RefSeq nucleotide sequence ID" value="NM_001004454.2"/>
    <property type="RefSeq protein sequence ID" value="NP_001004454.1"/>
</dbReference>
<dbReference type="UCSC" id="uc004bmp.1">
    <property type="organism name" value="human"/>
</dbReference>
<dbReference type="AGR" id="HGNC:15110"/>
<dbReference type="CTD" id="138881"/>
<dbReference type="GeneCards" id="OR1L8"/>
<dbReference type="HGNC" id="HGNC:15110">
    <property type="gene designation" value="OR1L8"/>
</dbReference>
<dbReference type="HPA" id="ENSG00000171496">
    <property type="expression patterns" value="Not detected"/>
</dbReference>
<dbReference type="neXtProt" id="NX_Q8NGR8"/>
<dbReference type="PharmGKB" id="PA32088"/>
<dbReference type="VEuPathDB" id="HostDB:ENSG00000171496"/>
<dbReference type="eggNOG" id="KOG3656">
    <property type="taxonomic scope" value="Eukaryota"/>
</dbReference>
<dbReference type="GeneTree" id="ENSGT00940000165018"/>
<dbReference type="HOGENOM" id="CLU_012526_1_0_1"/>
<dbReference type="InParanoid" id="Q8NGR8"/>
<dbReference type="OMA" id="AICFNPH"/>
<dbReference type="OrthoDB" id="8772365at2759"/>
<dbReference type="PAN-GO" id="Q8NGR8">
    <property type="GO annotations" value="3 GO annotations based on evolutionary models"/>
</dbReference>
<dbReference type="PhylomeDB" id="Q8NGR8"/>
<dbReference type="TreeFam" id="TF341149"/>
<dbReference type="PathwayCommons" id="Q8NGR8"/>
<dbReference type="Reactome" id="R-HSA-9752946">
    <property type="pathway name" value="Expression and translocation of olfactory receptors"/>
</dbReference>
<dbReference type="BioGRID-ORCS" id="138881">
    <property type="hits" value="14 hits in 742 CRISPR screens"/>
</dbReference>
<dbReference type="GeneWiki" id="OR1L8"/>
<dbReference type="GenomeRNAi" id="138881"/>
<dbReference type="Pharos" id="Q8NGR8">
    <property type="development level" value="Tdark"/>
</dbReference>
<dbReference type="PRO" id="PR:Q8NGR8"/>
<dbReference type="Proteomes" id="UP000005640">
    <property type="component" value="Chromosome 9"/>
</dbReference>
<dbReference type="RNAct" id="Q8NGR8">
    <property type="molecule type" value="protein"/>
</dbReference>
<dbReference type="Bgee" id="ENSG00000171496">
    <property type="expression patterns" value="Expressed in male germ line stem cell (sensu Vertebrata) in testis and 70 other cell types or tissues"/>
</dbReference>
<dbReference type="ExpressionAtlas" id="Q8NGR8">
    <property type="expression patterns" value="baseline and differential"/>
</dbReference>
<dbReference type="GO" id="GO:0005886">
    <property type="term" value="C:plasma membrane"/>
    <property type="evidence" value="ECO:0000318"/>
    <property type="project" value="GO_Central"/>
</dbReference>
<dbReference type="GO" id="GO:0004930">
    <property type="term" value="F:G protein-coupled receptor activity"/>
    <property type="evidence" value="ECO:0007669"/>
    <property type="project" value="UniProtKB-KW"/>
</dbReference>
<dbReference type="GO" id="GO:0004984">
    <property type="term" value="F:olfactory receptor activity"/>
    <property type="evidence" value="ECO:0000318"/>
    <property type="project" value="GO_Central"/>
</dbReference>
<dbReference type="GO" id="GO:0007165">
    <property type="term" value="P:signal transduction"/>
    <property type="evidence" value="ECO:0000318"/>
    <property type="project" value="GO_Central"/>
</dbReference>
<dbReference type="CDD" id="cd15235">
    <property type="entry name" value="7tmA_OR1A-like"/>
    <property type="match status" value="1"/>
</dbReference>
<dbReference type="FunFam" id="1.10.1220.70:FF:000001">
    <property type="entry name" value="Olfactory receptor"/>
    <property type="match status" value="1"/>
</dbReference>
<dbReference type="FunFam" id="1.20.1070.10:FF:000009">
    <property type="entry name" value="Olfactory receptor"/>
    <property type="match status" value="1"/>
</dbReference>
<dbReference type="Gene3D" id="1.20.1070.10">
    <property type="entry name" value="Rhodopsin 7-helix transmembrane proteins"/>
    <property type="match status" value="1"/>
</dbReference>
<dbReference type="InterPro" id="IPR000276">
    <property type="entry name" value="GPCR_Rhodpsn"/>
</dbReference>
<dbReference type="InterPro" id="IPR017452">
    <property type="entry name" value="GPCR_Rhodpsn_7TM"/>
</dbReference>
<dbReference type="InterPro" id="IPR000725">
    <property type="entry name" value="Olfact_rcpt"/>
</dbReference>
<dbReference type="PANTHER" id="PTHR48001">
    <property type="entry name" value="OLFACTORY RECEPTOR"/>
    <property type="match status" value="1"/>
</dbReference>
<dbReference type="Pfam" id="PF13853">
    <property type="entry name" value="7tm_4"/>
    <property type="match status" value="1"/>
</dbReference>
<dbReference type="PRINTS" id="PR00237">
    <property type="entry name" value="GPCRRHODOPSN"/>
</dbReference>
<dbReference type="PRINTS" id="PR00245">
    <property type="entry name" value="OLFACTORYR"/>
</dbReference>
<dbReference type="SUPFAM" id="SSF81321">
    <property type="entry name" value="Family A G protein-coupled receptor-like"/>
    <property type="match status" value="1"/>
</dbReference>
<dbReference type="PROSITE" id="PS00237">
    <property type="entry name" value="G_PROTEIN_RECEP_F1_1"/>
    <property type="match status" value="1"/>
</dbReference>
<dbReference type="PROSITE" id="PS50262">
    <property type="entry name" value="G_PROTEIN_RECEP_F1_2"/>
    <property type="match status" value="1"/>
</dbReference>
<accession>Q8NGR8</accession>
<accession>A3KFM3</accession>
<accession>B9EIR6</accession>
<accession>Q6IF15</accession>
<accession>Q96R79</accession>
<proteinExistence type="evidence at transcript level"/>
<name>OR1L8_HUMAN</name>